<name>RECU_STAAS</name>
<sequence length="208" mass="24444">MNYPNGKPYRKNSAIDGGKKTAAFSNIEYGGRGMSLEKDIEHSNTFYLKSDIAVIHKKPTPVQIVNVNYPKRSKAVINEAYFRTPSTTDYNGVYQGYYIDFEAKETKNKTSFPLNNIHDHQVEHMKNAYQQKGIVFLMIRFKTLDEVYLLPYSKFEVFWKRYKDNIKKSITVDEIRKNGYHIPYQYQPRLDYLKAVDKLILDESEDRV</sequence>
<accession>Q6G9B3</accession>
<proteinExistence type="inferred from homology"/>
<protein>
    <recommendedName>
        <fullName evidence="1">Holliday junction resolvase RecU</fullName>
        <ecNumber evidence="1">3.1.21.10</ecNumber>
    </recommendedName>
    <alternativeName>
        <fullName evidence="1">Recombination protein U homolog</fullName>
    </alternativeName>
</protein>
<gene>
    <name evidence="1" type="primary">recU</name>
    <name type="ordered locus">SAS1392</name>
</gene>
<evidence type="ECO:0000255" key="1">
    <source>
        <dbReference type="HAMAP-Rule" id="MF_00130"/>
    </source>
</evidence>
<keyword id="KW-0963">Cytoplasm</keyword>
<keyword id="KW-0227">DNA damage</keyword>
<keyword id="KW-0233">DNA recombination</keyword>
<keyword id="KW-0234">DNA repair</keyword>
<keyword id="KW-0255">Endonuclease</keyword>
<keyword id="KW-0378">Hydrolase</keyword>
<keyword id="KW-0460">Magnesium</keyword>
<keyword id="KW-0479">Metal-binding</keyword>
<keyword id="KW-0540">Nuclease</keyword>
<reference key="1">
    <citation type="journal article" date="2004" name="Proc. Natl. Acad. Sci. U.S.A.">
        <title>Complete genomes of two clinical Staphylococcus aureus strains: evidence for the rapid evolution of virulence and drug resistance.</title>
        <authorList>
            <person name="Holden M.T.G."/>
            <person name="Feil E.J."/>
            <person name="Lindsay J.A."/>
            <person name="Peacock S.J."/>
            <person name="Day N.P.J."/>
            <person name="Enright M.C."/>
            <person name="Foster T.J."/>
            <person name="Moore C.E."/>
            <person name="Hurst L."/>
            <person name="Atkin R."/>
            <person name="Barron A."/>
            <person name="Bason N."/>
            <person name="Bentley S.D."/>
            <person name="Chillingworth C."/>
            <person name="Chillingworth T."/>
            <person name="Churcher C."/>
            <person name="Clark L."/>
            <person name="Corton C."/>
            <person name="Cronin A."/>
            <person name="Doggett J."/>
            <person name="Dowd L."/>
            <person name="Feltwell T."/>
            <person name="Hance Z."/>
            <person name="Harris B."/>
            <person name="Hauser H."/>
            <person name="Holroyd S."/>
            <person name="Jagels K."/>
            <person name="James K.D."/>
            <person name="Lennard N."/>
            <person name="Line A."/>
            <person name="Mayes R."/>
            <person name="Moule S."/>
            <person name="Mungall K."/>
            <person name="Ormond D."/>
            <person name="Quail M.A."/>
            <person name="Rabbinowitsch E."/>
            <person name="Rutherford K.M."/>
            <person name="Sanders M."/>
            <person name="Sharp S."/>
            <person name="Simmonds M."/>
            <person name="Stevens K."/>
            <person name="Whitehead S."/>
            <person name="Barrell B.G."/>
            <person name="Spratt B.G."/>
            <person name="Parkhill J."/>
        </authorList>
    </citation>
    <scope>NUCLEOTIDE SEQUENCE [LARGE SCALE GENOMIC DNA]</scope>
    <source>
        <strain>MSSA476</strain>
    </source>
</reference>
<dbReference type="EC" id="3.1.21.10" evidence="1"/>
<dbReference type="EMBL" id="BX571857">
    <property type="protein sequence ID" value="CAG43168.1"/>
    <property type="molecule type" value="Genomic_DNA"/>
</dbReference>
<dbReference type="RefSeq" id="WP_001108889.1">
    <property type="nucleotide sequence ID" value="NC_002953.3"/>
</dbReference>
<dbReference type="SMR" id="Q6G9B3"/>
<dbReference type="KEGG" id="sas:SAS1392"/>
<dbReference type="HOGENOM" id="CLU_096340_0_0_9"/>
<dbReference type="GO" id="GO:0005737">
    <property type="term" value="C:cytoplasm"/>
    <property type="evidence" value="ECO:0007669"/>
    <property type="project" value="UniProtKB-SubCell"/>
</dbReference>
<dbReference type="GO" id="GO:0004519">
    <property type="term" value="F:endonuclease activity"/>
    <property type="evidence" value="ECO:0007669"/>
    <property type="project" value="UniProtKB-UniRule"/>
</dbReference>
<dbReference type="GO" id="GO:0000287">
    <property type="term" value="F:magnesium ion binding"/>
    <property type="evidence" value="ECO:0007669"/>
    <property type="project" value="UniProtKB-UniRule"/>
</dbReference>
<dbReference type="GO" id="GO:0003676">
    <property type="term" value="F:nucleic acid binding"/>
    <property type="evidence" value="ECO:0007669"/>
    <property type="project" value="InterPro"/>
</dbReference>
<dbReference type="GO" id="GO:0007059">
    <property type="term" value="P:chromosome segregation"/>
    <property type="evidence" value="ECO:0007669"/>
    <property type="project" value="UniProtKB-UniRule"/>
</dbReference>
<dbReference type="GO" id="GO:0006310">
    <property type="term" value="P:DNA recombination"/>
    <property type="evidence" value="ECO:0007669"/>
    <property type="project" value="UniProtKB-UniRule"/>
</dbReference>
<dbReference type="GO" id="GO:0006281">
    <property type="term" value="P:DNA repair"/>
    <property type="evidence" value="ECO:0007669"/>
    <property type="project" value="UniProtKB-UniRule"/>
</dbReference>
<dbReference type="CDD" id="cd22354">
    <property type="entry name" value="RecU-like"/>
    <property type="match status" value="1"/>
</dbReference>
<dbReference type="Gene3D" id="3.40.1350.10">
    <property type="match status" value="1"/>
</dbReference>
<dbReference type="HAMAP" id="MF_00130">
    <property type="entry name" value="RecU"/>
    <property type="match status" value="1"/>
</dbReference>
<dbReference type="InterPro" id="IPR004612">
    <property type="entry name" value="Resolv_RecU"/>
</dbReference>
<dbReference type="InterPro" id="IPR011335">
    <property type="entry name" value="Restrct_endonuc-II-like"/>
</dbReference>
<dbReference type="InterPro" id="IPR011856">
    <property type="entry name" value="tRNA_endonuc-like_dom_sf"/>
</dbReference>
<dbReference type="NCBIfam" id="NF002581">
    <property type="entry name" value="PRK02234.1-2"/>
    <property type="match status" value="1"/>
</dbReference>
<dbReference type="NCBIfam" id="NF002583">
    <property type="entry name" value="PRK02234.1-4"/>
    <property type="match status" value="1"/>
</dbReference>
<dbReference type="NCBIfam" id="NF002584">
    <property type="entry name" value="PRK02234.1-5"/>
    <property type="match status" value="1"/>
</dbReference>
<dbReference type="NCBIfam" id="TIGR00648">
    <property type="entry name" value="recU"/>
    <property type="match status" value="1"/>
</dbReference>
<dbReference type="Pfam" id="PF03838">
    <property type="entry name" value="RecU"/>
    <property type="match status" value="1"/>
</dbReference>
<dbReference type="PIRSF" id="PIRSF037785">
    <property type="entry name" value="RecU"/>
    <property type="match status" value="1"/>
</dbReference>
<dbReference type="SUPFAM" id="SSF52980">
    <property type="entry name" value="Restriction endonuclease-like"/>
    <property type="match status" value="1"/>
</dbReference>
<feature type="chain" id="PRO_0000212306" description="Holliday junction resolvase RecU">
    <location>
        <begin position="1"/>
        <end position="208"/>
    </location>
</feature>
<feature type="binding site" evidence="1">
    <location>
        <position position="87"/>
    </location>
    <ligand>
        <name>Mg(2+)</name>
        <dbReference type="ChEBI" id="CHEBI:18420"/>
    </ligand>
</feature>
<feature type="binding site" evidence="1">
    <location>
        <position position="89"/>
    </location>
    <ligand>
        <name>Mg(2+)</name>
        <dbReference type="ChEBI" id="CHEBI:18420"/>
    </ligand>
</feature>
<feature type="binding site" evidence="1">
    <location>
        <position position="102"/>
    </location>
    <ligand>
        <name>Mg(2+)</name>
        <dbReference type="ChEBI" id="CHEBI:18420"/>
    </ligand>
</feature>
<feature type="binding site" evidence="1">
    <location>
        <position position="121"/>
    </location>
    <ligand>
        <name>Mg(2+)</name>
        <dbReference type="ChEBI" id="CHEBI:18420"/>
    </ligand>
</feature>
<feature type="site" description="Transition state stabilizer" evidence="1">
    <location>
        <position position="104"/>
    </location>
</feature>
<organism>
    <name type="scientific">Staphylococcus aureus (strain MSSA476)</name>
    <dbReference type="NCBI Taxonomy" id="282459"/>
    <lineage>
        <taxon>Bacteria</taxon>
        <taxon>Bacillati</taxon>
        <taxon>Bacillota</taxon>
        <taxon>Bacilli</taxon>
        <taxon>Bacillales</taxon>
        <taxon>Staphylococcaceae</taxon>
        <taxon>Staphylococcus</taxon>
    </lineage>
</organism>
<comment type="function">
    <text evidence="1">Endonuclease that resolves Holliday junction intermediates in genetic recombination. Cleaves mobile four-strand junctions by introducing symmetrical nicks in paired strands. Promotes annealing of linear ssDNA with homologous dsDNA. Required for DNA repair, homologous recombination and chromosome segregation.</text>
</comment>
<comment type="catalytic activity">
    <reaction evidence="1">
        <text>Endonucleolytic cleavage at a junction such as a reciprocal single-stranded crossover between two homologous DNA duplexes (Holliday junction).</text>
        <dbReference type="EC" id="3.1.21.10"/>
    </reaction>
</comment>
<comment type="cofactor">
    <cofactor evidence="1">
        <name>Mg(2+)</name>
        <dbReference type="ChEBI" id="CHEBI:18420"/>
    </cofactor>
    <text evidence="1">Binds 1 Mg(2+) ion per subunit.</text>
</comment>
<comment type="subcellular location">
    <subcellularLocation>
        <location evidence="1">Cytoplasm</location>
    </subcellularLocation>
</comment>
<comment type="similarity">
    <text evidence="1">Belongs to the RecU family.</text>
</comment>